<organism>
    <name type="scientific">Mus musculus</name>
    <name type="common">Mouse</name>
    <dbReference type="NCBI Taxonomy" id="10090"/>
    <lineage>
        <taxon>Eukaryota</taxon>
        <taxon>Metazoa</taxon>
        <taxon>Chordata</taxon>
        <taxon>Craniata</taxon>
        <taxon>Vertebrata</taxon>
        <taxon>Euteleostomi</taxon>
        <taxon>Mammalia</taxon>
        <taxon>Eutheria</taxon>
        <taxon>Euarchontoglires</taxon>
        <taxon>Glires</taxon>
        <taxon>Rodentia</taxon>
        <taxon>Myomorpha</taxon>
        <taxon>Muroidea</taxon>
        <taxon>Muridae</taxon>
        <taxon>Murinae</taxon>
        <taxon>Mus</taxon>
        <taxon>Mus</taxon>
    </lineage>
</organism>
<comment type="function">
    <text>Inhibits axonal extension by providing local signals to specify territories inaccessible for growing axons.</text>
</comment>
<comment type="subunit">
    <text evidence="4">Interacts with GIPC PDZ domain.</text>
</comment>
<comment type="subcellular location">
    <subcellularLocation>
        <location>Membrane</location>
        <topology>Single-pass type I membrane protein</topology>
    </subcellularLocation>
</comment>
<comment type="developmental stage">
    <text>Expressed from day 10 in the embryo. Low levels found between days 10-12. Expression peaks on day 13 with moderate levels from then until birth.</text>
</comment>
<comment type="similarity">
    <text evidence="8">Belongs to the semaphorin family.</text>
</comment>
<comment type="sequence caution" evidence="8">
    <conflict type="erroneous initiation">
        <sequence resource="EMBL-CDS" id="BAD32527"/>
    </conflict>
</comment>
<name>SEM4B_MOUSE</name>
<sequence>MGRASRSAVLRRALLLLLLLLLLRTTTTRALGPRISVPLGSEERLIRKFEAENISNYTALLLSQDGKTLYVGAREALFALNSNLSFLPGGEYQELLWSADADRKQQCSFKGKDPKRDCQNYIKILLPLNSSHLLTCGTAAFSPLCAYIHIASFTLAQDEAGNVILEDGKGRCPFDPNFKSTALVVDGELYTGTVSSFQGNDPAISRSQSSRPTKTESSLNWLQDPAFVASAYVPESLGSPIGDDDKIYFFFSETGQEFEFFENTIVSRVARVCKGDEGGERVLQQRWTSFLKAQLLCSRPDDGFPFNVLQDVFTLNPNPQDWRKTLFYGVFTSQWHRGTTEGSAICVFTMNDVQKAFDGLYKKVNRETQQWYTETHQVPTPRPGACITNSARERKINSSLQLPDRVLNFLKDHFLMDGQVRSRLLLLQPRARYQRVAVHRVPGLHSTYDVLFLGTGDGRLHKAVTLSSRVHIIEELQIFPQGQPVQNLLLDSHGGLLYASSHSGVVQVPVANCSLYPTCGDCLLARDPYCAWTGSACRLASLYQPDLASRPWTQDIEGASVKELCKNSSYKARFLVPGKPCKQVQIQPNTVNTLACPLLSNLATRLWVHNGAPVNASASCRVLPTGDLLLVGSQQGLGVFQCWSIEEGFQQLVASYCPEVMEEGVMDQKNQRDGTPVIINTSRVSAPAGGRASWGADKSYWNEFLVMCTLFVFAMVLLFLFFLYRHRDGMKLFLKQGECASVHPKTRPIVLPPETRPLNGVGPPSTPLDHRGYQALSDSSPGPRVFTESEKRPLSIQDSFVEVSPVCPRPRVRLGSEIRDSVV</sequence>
<feature type="signal peptide" evidence="2">
    <location>
        <begin position="1"/>
        <end position="30"/>
    </location>
</feature>
<feature type="chain" id="PRO_0000042162" description="Semaphorin-4B">
    <location>
        <begin position="31"/>
        <end position="823"/>
    </location>
</feature>
<feature type="topological domain" description="Extracellular" evidence="2">
    <location>
        <begin position="31"/>
        <end position="703"/>
    </location>
</feature>
<feature type="transmembrane region" description="Helical" evidence="2">
    <location>
        <begin position="704"/>
        <end position="724"/>
    </location>
</feature>
<feature type="topological domain" description="Cytoplasmic" evidence="2">
    <location>
        <begin position="725"/>
        <end position="823"/>
    </location>
</feature>
<feature type="domain" description="Sema" evidence="3">
    <location>
        <begin position="34"/>
        <end position="510"/>
    </location>
</feature>
<feature type="domain" description="PSI">
    <location>
        <begin position="512"/>
        <end position="582"/>
    </location>
</feature>
<feature type="domain" description="Ig-like C2-type">
    <location>
        <begin position="589"/>
        <end position="649"/>
    </location>
</feature>
<feature type="modified residue" description="Phosphoserine" evidence="1">
    <location>
        <position position="779"/>
    </location>
</feature>
<feature type="modified residue" description="Phosphoserine" evidence="12">
    <location>
        <position position="780"/>
    </location>
</feature>
<feature type="modified residue" description="Phosphoserine" evidence="12">
    <location>
        <position position="804"/>
    </location>
</feature>
<feature type="modified residue" description="Phosphoserine" evidence="1">
    <location>
        <position position="816"/>
    </location>
</feature>
<feature type="glycosylation site" description="N-linked (GlcNAc...) asparagine" evidence="2">
    <location>
        <position position="53"/>
    </location>
</feature>
<feature type="glycosylation site" description="N-linked (GlcNAc...) asparagine" evidence="2">
    <location>
        <position position="56"/>
    </location>
</feature>
<feature type="glycosylation site" description="N-linked (GlcNAc...) asparagine" evidence="2">
    <location>
        <position position="83"/>
    </location>
</feature>
<feature type="glycosylation site" description="N-linked (GlcNAc...) asparagine" evidence="2">
    <location>
        <position position="129"/>
    </location>
</feature>
<feature type="glycosylation site" description="N-linked (GlcNAc...) asparagine" evidence="5">
    <location>
        <position position="397"/>
    </location>
</feature>
<feature type="glycosylation site" description="N-linked (GlcNAc...) asparagine" evidence="2">
    <location>
        <position position="512"/>
    </location>
</feature>
<feature type="glycosylation site" description="N-linked (GlcNAc...) asparagine" evidence="2">
    <location>
        <position position="567"/>
    </location>
</feature>
<feature type="glycosylation site" description="N-linked (GlcNAc...) asparagine" evidence="2">
    <location>
        <position position="615"/>
    </location>
</feature>
<feature type="glycosylation site" description="N-linked (GlcNAc...) asparagine" evidence="2">
    <location>
        <position position="680"/>
    </location>
</feature>
<feature type="disulfide bond" evidence="3">
    <location>
        <begin position="107"/>
        <end position="118"/>
    </location>
</feature>
<feature type="disulfide bond" evidence="3">
    <location>
        <begin position="136"/>
        <end position="145"/>
    </location>
</feature>
<feature type="disulfide bond" evidence="3">
    <location>
        <begin position="273"/>
        <end position="386"/>
    </location>
</feature>
<feature type="disulfide bond" evidence="3">
    <location>
        <begin position="297"/>
        <end position="346"/>
    </location>
</feature>
<feature type="disulfide bond" evidence="3">
    <location>
        <begin position="513"/>
        <end position="530"/>
    </location>
</feature>
<feature type="disulfide bond" evidence="3">
    <location>
        <begin position="596"/>
        <end position="642"/>
    </location>
</feature>
<feature type="sequence conflict" description="In Ref. 3; CAA59984." evidence="8" ref="3">
    <original>R</original>
    <variation>H</variation>
    <location>
        <position position="171"/>
    </location>
</feature>
<feature type="sequence conflict" description="In Ref. 3; CAA59984." evidence="8" ref="3">
    <original>YV</original>
    <variation>TS</variation>
    <location>
        <begin position="232"/>
        <end position="233"/>
    </location>
</feature>
<feature type="sequence conflict" description="In Ref. 1; AAY82464." evidence="8" ref="1">
    <original>K</original>
    <variation>R</variation>
    <location>
        <position position="246"/>
    </location>
</feature>
<feature type="sequence conflict" description="In Ref. 3; CAA59984." evidence="8" ref="3">
    <original>FY</original>
    <variation>SI</variation>
    <location>
        <begin position="327"/>
        <end position="328"/>
    </location>
</feature>
<feature type="sequence conflict" description="In Ref. 1; AAY82464." evidence="8" ref="1">
    <original>Q</original>
    <variation>K</variation>
    <location>
        <position position="544"/>
    </location>
</feature>
<feature type="sequence conflict" description="In Ref. 3; CAA59984." evidence="8" ref="3">
    <original>A</original>
    <variation>D</variation>
    <location>
        <position position="692"/>
    </location>
</feature>
<feature type="sequence conflict" description="In Ref. 1; AAY82464." evidence="8" ref="1">
    <original>F</original>
    <variation>L</variation>
    <location>
        <position position="722"/>
    </location>
</feature>
<feature type="sequence conflict" description="In Ref. 1; AAY82464." evidence="8" ref="1">
    <original>G</original>
    <variation>C</variation>
    <location>
        <position position="760"/>
    </location>
</feature>
<evidence type="ECO:0000250" key="1">
    <source>
        <dbReference type="UniProtKB" id="Q9NPR2"/>
    </source>
</evidence>
<evidence type="ECO:0000255" key="2"/>
<evidence type="ECO:0000255" key="3">
    <source>
        <dbReference type="PROSITE-ProRule" id="PRU00352"/>
    </source>
</evidence>
<evidence type="ECO:0000269" key="4">
    <source>
    </source>
</evidence>
<evidence type="ECO:0000269" key="5">
    <source>
    </source>
</evidence>
<evidence type="ECO:0000303" key="6">
    <source>
    </source>
</evidence>
<evidence type="ECO:0000303" key="7">
    <source>
    </source>
</evidence>
<evidence type="ECO:0000305" key="8"/>
<evidence type="ECO:0000305" key="9">
    <source>
    </source>
</evidence>
<evidence type="ECO:0000305" key="10">
    <source ref="1"/>
</evidence>
<evidence type="ECO:0000312" key="11">
    <source>
        <dbReference type="MGI" id="MGI:107559"/>
    </source>
</evidence>
<evidence type="ECO:0007744" key="12">
    <source>
    </source>
</evidence>
<proteinExistence type="evidence at protein level"/>
<reference key="1">
    <citation type="submission" date="2005-05" db="EMBL/GenBank/DDBJ databases">
        <title>Re-examination of 5' end of mouse semaphorin 4B (Sema4B).</title>
        <authorList>
            <person name="Duke-Cohan J.S."/>
        </authorList>
    </citation>
    <scope>NUCLEOTIDE SEQUENCE [MRNA]</scope>
    <source>
        <strain>NZW/LacJ</strain>
        <tissue>Thymus</tissue>
    </source>
</reference>
<reference key="2">
    <citation type="journal article" date="2004" name="DNA Res.">
        <title>Prediction of the coding sequences of mouse homologues of KIAA gene: IV. The complete nucleotide sequences of 500 mouse KIAA-homologous cDNAs identified by screening of terminal sequences of cDNA clones randomly sampled from size-fractionated libraries.</title>
        <authorList>
            <person name="Okazaki N."/>
            <person name="Kikuno R."/>
            <person name="Ohara R."/>
            <person name="Inamoto S."/>
            <person name="Koseki H."/>
            <person name="Hiraoka S."/>
            <person name="Saga Y."/>
            <person name="Seino S."/>
            <person name="Nishimura M."/>
            <person name="Kaisho T."/>
            <person name="Hoshino K."/>
            <person name="Kitamura H."/>
            <person name="Nagase T."/>
            <person name="Ohara O."/>
            <person name="Koga H."/>
        </authorList>
    </citation>
    <scope>NUCLEOTIDE SEQUENCE [LARGE SCALE MRNA]</scope>
    <source>
        <tissue>Pancreatic islet</tissue>
    </source>
</reference>
<reference key="3">
    <citation type="journal article" date="1995" name="Neuron">
        <title>Murine semaphorin D/collapsin is a member of a diverse gene family and creates domains inhibitory for axonal extension.</title>
        <authorList>
            <person name="Pueschel A.W."/>
            <person name="Adams R.H."/>
            <person name="Betz H."/>
        </authorList>
    </citation>
    <scope>NUCLEOTIDE SEQUENCE [MRNA] OF 42-823</scope>
    <source>
        <strain>NMRI</strain>
        <tissue>Brain</tissue>
    </source>
</reference>
<reference key="4">
    <citation type="journal article" date="1999" name="J. Biol. Chem.">
        <title>A PDZ protein regulates the distribution of the transmembrane semaphorin, M-SemF.</title>
        <authorList>
            <person name="Wang L.-H."/>
            <person name="Kalb R.G."/>
            <person name="Strittmatter S.M."/>
        </authorList>
    </citation>
    <scope>INTERACTION WITH GIPC</scope>
</reference>
<reference key="5">
    <citation type="journal article" date="2009" name="Immunity">
        <title>The phagosomal proteome in interferon-gamma-activated macrophages.</title>
        <authorList>
            <person name="Trost M."/>
            <person name="English L."/>
            <person name="Lemieux S."/>
            <person name="Courcelles M."/>
            <person name="Desjardins M."/>
            <person name="Thibault P."/>
        </authorList>
    </citation>
    <scope>IDENTIFICATION BY MASS SPECTROMETRY [LARGE SCALE ANALYSIS]</scope>
</reference>
<reference key="6">
    <citation type="journal article" date="2009" name="Nat. Biotechnol.">
        <title>Mass-spectrometric identification and relative quantification of N-linked cell surface glycoproteins.</title>
        <authorList>
            <person name="Wollscheid B."/>
            <person name="Bausch-Fluck D."/>
            <person name="Henderson C."/>
            <person name="O'Brien R."/>
            <person name="Bibel M."/>
            <person name="Schiess R."/>
            <person name="Aebersold R."/>
            <person name="Watts J.D."/>
        </authorList>
    </citation>
    <scope>GLYCOSYLATION [LARGE SCALE ANALYSIS] AT ASN-397</scope>
</reference>
<reference key="7">
    <citation type="journal article" date="2010" name="Cell">
        <title>A tissue-specific atlas of mouse protein phosphorylation and expression.</title>
        <authorList>
            <person name="Huttlin E.L."/>
            <person name="Jedrychowski M.P."/>
            <person name="Elias J.E."/>
            <person name="Goswami T."/>
            <person name="Rad R."/>
            <person name="Beausoleil S.A."/>
            <person name="Villen J."/>
            <person name="Haas W."/>
            <person name="Sowa M.E."/>
            <person name="Gygi S.P."/>
        </authorList>
    </citation>
    <scope>PHOSPHORYLATION [LARGE SCALE ANALYSIS] AT SER-780 AND SER-804</scope>
    <scope>IDENTIFICATION BY MASS SPECTROMETRY [LARGE SCALE ANALYSIS]</scope>
    <source>
        <tissue>Kidney</tissue>
        <tissue>Spleen</tissue>
    </source>
</reference>
<protein>
    <recommendedName>
        <fullName evidence="10">Semaphorin-4B</fullName>
    </recommendedName>
    <alternativeName>
        <fullName evidence="9">Semaphorin-C</fullName>
        <shortName>Sema C</shortName>
    </alternativeName>
</protein>
<keyword id="KW-0217">Developmental protein</keyword>
<keyword id="KW-0221">Differentiation</keyword>
<keyword id="KW-1015">Disulfide bond</keyword>
<keyword id="KW-0325">Glycoprotein</keyword>
<keyword id="KW-0393">Immunoglobulin domain</keyword>
<keyword id="KW-0472">Membrane</keyword>
<keyword id="KW-0524">Neurogenesis</keyword>
<keyword id="KW-0597">Phosphoprotein</keyword>
<keyword id="KW-1185">Reference proteome</keyword>
<keyword id="KW-0732">Signal</keyword>
<keyword id="KW-0812">Transmembrane</keyword>
<keyword id="KW-1133">Transmembrane helix</keyword>
<dbReference type="EMBL" id="DQ073331">
    <property type="protein sequence ID" value="AAY82464.1"/>
    <property type="molecule type" value="mRNA"/>
</dbReference>
<dbReference type="EMBL" id="AK173249">
    <property type="protein sequence ID" value="BAD32527.1"/>
    <property type="status" value="ALT_INIT"/>
    <property type="molecule type" value="mRNA"/>
</dbReference>
<dbReference type="EMBL" id="X85992">
    <property type="protein sequence ID" value="CAA59984.1"/>
    <property type="molecule type" value="mRNA"/>
</dbReference>
<dbReference type="CCDS" id="CCDS21391.1"/>
<dbReference type="PIR" id="I48746">
    <property type="entry name" value="I48746"/>
</dbReference>
<dbReference type="RefSeq" id="NP_001347064.1">
    <property type="nucleotide sequence ID" value="NM_001360135.2"/>
</dbReference>
<dbReference type="RefSeq" id="NP_038687.2">
    <property type="nucleotide sequence ID" value="NM_013659.5"/>
</dbReference>
<dbReference type="RefSeq" id="XP_011249132.1">
    <property type="nucleotide sequence ID" value="XM_011250830.2"/>
</dbReference>
<dbReference type="RefSeq" id="XP_030098119.2">
    <property type="nucleotide sequence ID" value="XM_030242259.2"/>
</dbReference>
<dbReference type="RefSeq" id="XP_036008713.1">
    <property type="nucleotide sequence ID" value="XM_036152820.1"/>
</dbReference>
<dbReference type="SMR" id="Q62179"/>
<dbReference type="BioGRID" id="203167">
    <property type="interactions" value="8"/>
</dbReference>
<dbReference type="FunCoup" id="Q62179">
    <property type="interactions" value="468"/>
</dbReference>
<dbReference type="IntAct" id="Q62179">
    <property type="interactions" value="2"/>
</dbReference>
<dbReference type="MINT" id="Q62179"/>
<dbReference type="STRING" id="10090.ENSMUSP00000032754"/>
<dbReference type="GlyConnect" id="2697">
    <property type="glycosylation" value="2 N-Linked glycans (2 sites)"/>
</dbReference>
<dbReference type="GlyCosmos" id="Q62179">
    <property type="glycosylation" value="9 sites, 2 glycans"/>
</dbReference>
<dbReference type="GlyGen" id="Q62179">
    <property type="glycosylation" value="9 sites, 6 N-linked glycans (5 sites)"/>
</dbReference>
<dbReference type="iPTMnet" id="Q62179"/>
<dbReference type="PhosphoSitePlus" id="Q62179"/>
<dbReference type="jPOST" id="Q62179"/>
<dbReference type="PaxDb" id="10090-ENSMUSP00000032754"/>
<dbReference type="PeptideAtlas" id="Q62179"/>
<dbReference type="ProteomicsDB" id="256616"/>
<dbReference type="Antibodypedia" id="2694">
    <property type="antibodies" value="267 antibodies from 25 providers"/>
</dbReference>
<dbReference type="DNASU" id="20352"/>
<dbReference type="Ensembl" id="ENSMUST00000032754.9">
    <property type="protein sequence ID" value="ENSMUSP00000032754.8"/>
    <property type="gene ID" value="ENSMUSG00000030539.14"/>
</dbReference>
<dbReference type="Ensembl" id="ENSMUST00000205822.2">
    <property type="protein sequence ID" value="ENSMUSP00000145622.2"/>
    <property type="gene ID" value="ENSMUSG00000030539.14"/>
</dbReference>
<dbReference type="GeneID" id="20352"/>
<dbReference type="KEGG" id="mmu:20352"/>
<dbReference type="UCSC" id="uc009hzo.1">
    <property type="organism name" value="mouse"/>
</dbReference>
<dbReference type="AGR" id="MGI:107559"/>
<dbReference type="CTD" id="10509"/>
<dbReference type="MGI" id="MGI:107559">
    <property type="gene designation" value="Sema4b"/>
</dbReference>
<dbReference type="VEuPathDB" id="HostDB:ENSMUSG00000030539"/>
<dbReference type="eggNOG" id="KOG3611">
    <property type="taxonomic scope" value="Eukaryota"/>
</dbReference>
<dbReference type="GeneTree" id="ENSGT00940000154870"/>
<dbReference type="HOGENOM" id="CLU_009051_4_3_1"/>
<dbReference type="InParanoid" id="Q62179"/>
<dbReference type="OMA" id="YINVQHF"/>
<dbReference type="OrthoDB" id="9988752at2759"/>
<dbReference type="PhylomeDB" id="Q62179"/>
<dbReference type="TreeFam" id="TF352903"/>
<dbReference type="BioGRID-ORCS" id="20352">
    <property type="hits" value="2 hits in 80 CRISPR screens"/>
</dbReference>
<dbReference type="ChiTaRS" id="Sema4b">
    <property type="organism name" value="mouse"/>
</dbReference>
<dbReference type="PRO" id="PR:Q62179"/>
<dbReference type="Proteomes" id="UP000000589">
    <property type="component" value="Chromosome 7"/>
</dbReference>
<dbReference type="RNAct" id="Q62179">
    <property type="molecule type" value="protein"/>
</dbReference>
<dbReference type="Bgee" id="ENSMUSG00000030539">
    <property type="expression patterns" value="Expressed in cumulus cell and 226 other cell types or tissues"/>
</dbReference>
<dbReference type="GO" id="GO:0098978">
    <property type="term" value="C:glutamatergic synapse"/>
    <property type="evidence" value="ECO:0000314"/>
    <property type="project" value="SynGO"/>
</dbReference>
<dbReference type="GO" id="GO:0016020">
    <property type="term" value="C:membrane"/>
    <property type="evidence" value="ECO:0000314"/>
    <property type="project" value="MGI"/>
</dbReference>
<dbReference type="GO" id="GO:0005886">
    <property type="term" value="C:plasma membrane"/>
    <property type="evidence" value="ECO:0000314"/>
    <property type="project" value="MGI"/>
</dbReference>
<dbReference type="GO" id="GO:0098839">
    <property type="term" value="C:postsynaptic density membrane"/>
    <property type="evidence" value="ECO:0000314"/>
    <property type="project" value="SynGO"/>
</dbReference>
<dbReference type="GO" id="GO:0045202">
    <property type="term" value="C:synapse"/>
    <property type="evidence" value="ECO:0000314"/>
    <property type="project" value="MGI"/>
</dbReference>
<dbReference type="GO" id="GO:0030215">
    <property type="term" value="F:semaphorin receptor binding"/>
    <property type="evidence" value="ECO:0007669"/>
    <property type="project" value="InterPro"/>
</dbReference>
<dbReference type="GO" id="GO:0030154">
    <property type="term" value="P:cell differentiation"/>
    <property type="evidence" value="ECO:0007669"/>
    <property type="project" value="UniProtKB-KW"/>
</dbReference>
<dbReference type="GO" id="GO:0007399">
    <property type="term" value="P:nervous system development"/>
    <property type="evidence" value="ECO:0007669"/>
    <property type="project" value="UniProtKB-KW"/>
</dbReference>
<dbReference type="CDD" id="cd05872">
    <property type="entry name" value="Ig_Sema4B_like"/>
    <property type="match status" value="1"/>
</dbReference>
<dbReference type="FunFam" id="2.130.10.10:FF:000033">
    <property type="entry name" value="Semaphorin 4B"/>
    <property type="match status" value="1"/>
</dbReference>
<dbReference type="FunFam" id="3.30.1680.10:FF:000022">
    <property type="entry name" value="Semaphorin 4B"/>
    <property type="match status" value="1"/>
</dbReference>
<dbReference type="Gene3D" id="3.30.1680.10">
    <property type="entry name" value="ligand-binding face of the semaphorins, domain 2"/>
    <property type="match status" value="1"/>
</dbReference>
<dbReference type="Gene3D" id="2.130.10.10">
    <property type="entry name" value="YVTN repeat-like/Quinoprotein amine dehydrogenase"/>
    <property type="match status" value="1"/>
</dbReference>
<dbReference type="InterPro" id="IPR002165">
    <property type="entry name" value="Plexin_repeat"/>
</dbReference>
<dbReference type="InterPro" id="IPR016201">
    <property type="entry name" value="PSI"/>
</dbReference>
<dbReference type="InterPro" id="IPR001627">
    <property type="entry name" value="Semap_dom"/>
</dbReference>
<dbReference type="InterPro" id="IPR036352">
    <property type="entry name" value="Semap_dom_sf"/>
</dbReference>
<dbReference type="InterPro" id="IPR027231">
    <property type="entry name" value="Semaphorin"/>
</dbReference>
<dbReference type="InterPro" id="IPR015943">
    <property type="entry name" value="WD40/YVTN_repeat-like_dom_sf"/>
</dbReference>
<dbReference type="PANTHER" id="PTHR11036">
    <property type="entry name" value="SEMAPHORIN"/>
    <property type="match status" value="1"/>
</dbReference>
<dbReference type="PANTHER" id="PTHR11036:SF14">
    <property type="entry name" value="SEMAPHORIN-4B"/>
    <property type="match status" value="1"/>
</dbReference>
<dbReference type="Pfam" id="PF01437">
    <property type="entry name" value="PSI"/>
    <property type="match status" value="1"/>
</dbReference>
<dbReference type="Pfam" id="PF01403">
    <property type="entry name" value="Sema"/>
    <property type="match status" value="1"/>
</dbReference>
<dbReference type="SMART" id="SM00423">
    <property type="entry name" value="PSI"/>
    <property type="match status" value="1"/>
</dbReference>
<dbReference type="SMART" id="SM00630">
    <property type="entry name" value="Sema"/>
    <property type="match status" value="1"/>
</dbReference>
<dbReference type="SUPFAM" id="SSF103575">
    <property type="entry name" value="Plexin repeat"/>
    <property type="match status" value="1"/>
</dbReference>
<dbReference type="SUPFAM" id="SSF101912">
    <property type="entry name" value="Sema domain"/>
    <property type="match status" value="1"/>
</dbReference>
<dbReference type="PROSITE" id="PS51004">
    <property type="entry name" value="SEMA"/>
    <property type="match status" value="1"/>
</dbReference>
<gene>
    <name evidence="11" type="primary">Sema4b</name>
    <name evidence="6" type="synonym">Kiaa1745</name>
    <name type="synonym">Semac</name>
    <name evidence="7" type="synonym">SemC</name>
</gene>
<accession>Q62179</accession>
<accession>Q4PKI6</accession>
<accession>Q69ZB7</accession>